<accession>Q8WY98</accession>
<accession>B2R535</accession>
<accession>D3DPP7</accession>
<accession>Q6UWY9</accession>
<accession>Q8N2H6</accession>
<accession>Q9BSR2</accession>
<accession>Q9NU76</accession>
<sequence length="164" mass="17601">MAASLGQVLALVLVAALWGGTQPLLKRASAGLQRVHEPTWAQQLLQEMKTLFLNTEYLMPFLLNQCGSLLYYLTLASTDLTLAVPICNSLAIIFTLIVGKALGEDIGGKRAVAGMVLTVIGISLCITSSVPWTAELQLHGKGQLQTLSQKCKREASGTQSERFG</sequence>
<organism>
    <name type="scientific">Homo sapiens</name>
    <name type="common">Human</name>
    <dbReference type="NCBI Taxonomy" id="9606"/>
    <lineage>
        <taxon>Eukaryota</taxon>
        <taxon>Metazoa</taxon>
        <taxon>Chordata</taxon>
        <taxon>Craniata</taxon>
        <taxon>Vertebrata</taxon>
        <taxon>Euteleostomi</taxon>
        <taxon>Mammalia</taxon>
        <taxon>Eutheria</taxon>
        <taxon>Euarchontoglires</taxon>
        <taxon>Primates</taxon>
        <taxon>Haplorrhini</taxon>
        <taxon>Catarrhini</taxon>
        <taxon>Hominidae</taxon>
        <taxon>Homo</taxon>
    </lineage>
</organism>
<dbReference type="EMBL" id="AY358586">
    <property type="protein sequence ID" value="AAQ88949.1"/>
    <property type="molecule type" value="mRNA"/>
</dbReference>
<dbReference type="EMBL" id="AK075260">
    <property type="protein sequence ID" value="BAC11504.1"/>
    <property type="status" value="ALT_INIT"/>
    <property type="molecule type" value="mRNA"/>
</dbReference>
<dbReference type="EMBL" id="AK312046">
    <property type="protein sequence ID" value="BAG34982.1"/>
    <property type="molecule type" value="mRNA"/>
</dbReference>
<dbReference type="EMBL" id="AF258548">
    <property type="protein sequence ID" value="AAG23751.1"/>
    <property type="molecule type" value="mRNA"/>
</dbReference>
<dbReference type="EMBL" id="AL049795">
    <property type="status" value="NOT_ANNOTATED_CDS"/>
    <property type="molecule type" value="Genomic_DNA"/>
</dbReference>
<dbReference type="EMBL" id="CH471059">
    <property type="protein sequence ID" value="EAX07556.1"/>
    <property type="molecule type" value="Genomic_DNA"/>
</dbReference>
<dbReference type="EMBL" id="CH471059">
    <property type="protein sequence ID" value="EAX07559.1"/>
    <property type="molecule type" value="Genomic_DNA"/>
</dbReference>
<dbReference type="EMBL" id="BC001256">
    <property type="status" value="NOT_ANNOTATED_CDS"/>
    <property type="molecule type" value="mRNA"/>
</dbReference>
<dbReference type="EMBL" id="CH471059">
    <property type="protein sequence ID" value="EAX07557.1"/>
    <property type="molecule type" value="Genomic_DNA"/>
</dbReference>
<dbReference type="EMBL" id="BC004885">
    <property type="protein sequence ID" value="AAH04885.1"/>
    <property type="molecule type" value="mRNA"/>
</dbReference>
<dbReference type="EMBL" id="BC038842">
    <property type="protein sequence ID" value="AAH38842.1"/>
    <property type="molecule type" value="mRNA"/>
</dbReference>
<dbReference type="CCDS" id="CCDS356.2">
    <molecule id="Q8WY98-3"/>
</dbReference>
<dbReference type="CCDS" id="CCDS90906.1">
    <molecule id="Q8WY98-1"/>
</dbReference>
<dbReference type="RefSeq" id="NP_001353120.1">
    <molecule id="Q8WY98-1"/>
    <property type="nucleotide sequence ID" value="NM_001366191.2"/>
</dbReference>
<dbReference type="RefSeq" id="NP_061991.3">
    <molecule id="Q8WY98-3"/>
    <property type="nucleotide sequence ID" value="NM_019118.4"/>
</dbReference>
<dbReference type="RefSeq" id="XP_016857301.1">
    <property type="nucleotide sequence ID" value="XM_017001812.1"/>
</dbReference>
<dbReference type="RefSeq" id="XP_016857302.1">
    <property type="nucleotide sequence ID" value="XM_017001813.1"/>
</dbReference>
<dbReference type="RefSeq" id="XP_016857306.1">
    <property type="nucleotide sequence ID" value="XM_017001817.1"/>
</dbReference>
<dbReference type="RefSeq" id="XP_016857307.1">
    <property type="nucleotide sequence ID" value="XM_017001818.1"/>
</dbReference>
<dbReference type="RefSeq" id="XP_016857308.1">
    <property type="nucleotide sequence ID" value="XM_017001819.1"/>
</dbReference>
<dbReference type="RefSeq" id="XP_016857309.1">
    <property type="nucleotide sequence ID" value="XM_017001820.1"/>
</dbReference>
<dbReference type="RefSeq" id="XP_016857310.1">
    <property type="nucleotide sequence ID" value="XM_017001821.1"/>
</dbReference>
<dbReference type="RefSeq" id="XP_016857311.1">
    <property type="nucleotide sequence ID" value="XM_017001822.1"/>
</dbReference>
<dbReference type="RefSeq" id="XP_016857312.1">
    <property type="nucleotide sequence ID" value="XM_017001823.1"/>
</dbReference>
<dbReference type="RefSeq" id="XP_016857313.1">
    <property type="nucleotide sequence ID" value="XM_017001824.1"/>
</dbReference>
<dbReference type="RefSeq" id="XP_016857315.1">
    <property type="nucleotide sequence ID" value="XM_017001826.1"/>
</dbReference>
<dbReference type="RefSeq" id="XP_016857316.1">
    <property type="nucleotide sequence ID" value="XM_017001827.1"/>
</dbReference>
<dbReference type="RefSeq" id="XP_016857317.1">
    <property type="nucleotide sequence ID" value="XM_017001828.1"/>
</dbReference>
<dbReference type="RefSeq" id="XP_016857318.1">
    <property type="nucleotide sequence ID" value="XM_017001829.1"/>
</dbReference>
<dbReference type="RefSeq" id="XP_016857319.1">
    <property type="nucleotide sequence ID" value="XM_017001830.1"/>
</dbReference>
<dbReference type="RefSeq" id="XP_047281435.1">
    <molecule id="Q8WY98-1"/>
    <property type="nucleotide sequence ID" value="XM_047425479.1"/>
</dbReference>
<dbReference type="RefSeq" id="XP_047281439.1">
    <molecule id="Q8WY98-1"/>
    <property type="nucleotide sequence ID" value="XM_047425483.1"/>
</dbReference>
<dbReference type="RefSeq" id="XP_047281441.1">
    <molecule id="Q8WY98-1"/>
    <property type="nucleotide sequence ID" value="XM_047425485.1"/>
</dbReference>
<dbReference type="RefSeq" id="XP_054193693.1">
    <molecule id="Q8WY98-2"/>
    <property type="nucleotide sequence ID" value="XM_054337718.1"/>
</dbReference>
<dbReference type="RefSeq" id="XP_054193694.1">
    <molecule id="Q8WY98-2"/>
    <property type="nucleotide sequence ID" value="XM_054337719.1"/>
</dbReference>
<dbReference type="RefSeq" id="XP_054193696.1">
    <molecule id="Q8WY98-1"/>
    <property type="nucleotide sequence ID" value="XM_054337721.1"/>
</dbReference>
<dbReference type="RefSeq" id="XP_054193697.1">
    <molecule id="Q8WY98-1"/>
    <property type="nucleotide sequence ID" value="XM_054337722.1"/>
</dbReference>
<dbReference type="RefSeq" id="XP_054193698.1">
    <molecule id="Q8WY98-1"/>
    <property type="nucleotide sequence ID" value="XM_054337723.1"/>
</dbReference>
<dbReference type="BioGRID" id="121036">
    <property type="interactions" value="19"/>
</dbReference>
<dbReference type="FunCoup" id="Q8WY98">
    <property type="interactions" value="198"/>
</dbReference>
<dbReference type="IntAct" id="Q8WY98">
    <property type="interactions" value="18"/>
</dbReference>
<dbReference type="MINT" id="Q8WY98"/>
<dbReference type="STRING" id="9606.ENSP00000309792"/>
<dbReference type="TCDB" id="2.A.7.32.1">
    <property type="family name" value="the drug/metabolite transporter (dmt) superfamily"/>
</dbReference>
<dbReference type="iPTMnet" id="Q8WY98"/>
<dbReference type="BioMuta" id="TMEM234"/>
<dbReference type="DMDM" id="74760615"/>
<dbReference type="jPOST" id="Q8WY98"/>
<dbReference type="MassIVE" id="Q8WY98"/>
<dbReference type="PaxDb" id="9606-ENSP00000309792"/>
<dbReference type="PeptideAtlas" id="Q8WY98"/>
<dbReference type="ProteomicsDB" id="75136">
    <molecule id="Q8WY98-1"/>
</dbReference>
<dbReference type="ProteomicsDB" id="75137">
    <molecule id="Q8WY98-2"/>
</dbReference>
<dbReference type="ProteomicsDB" id="75138">
    <molecule id="Q8WY98-3"/>
</dbReference>
<dbReference type="ProteomicsDB" id="75139">
    <molecule id="Q8WY98-4"/>
</dbReference>
<dbReference type="Antibodypedia" id="3093">
    <property type="antibodies" value="9 antibodies from 7 providers"/>
</dbReference>
<dbReference type="DNASU" id="56063"/>
<dbReference type="Ensembl" id="ENST00000309777.11">
    <molecule id="Q8WY98-3"/>
    <property type="protein sequence ID" value="ENSP00000309792.6"/>
    <property type="gene ID" value="ENSG00000160055.20"/>
</dbReference>
<dbReference type="Ensembl" id="ENST00000344461.7">
    <molecule id="Q8WY98-1"/>
    <property type="protein sequence ID" value="ENSP00000344021.3"/>
    <property type="gene ID" value="ENSG00000160055.20"/>
</dbReference>
<dbReference type="Ensembl" id="ENST00000373593.5">
    <molecule id="Q8WY98-2"/>
    <property type="protein sequence ID" value="ENSP00000362695.1"/>
    <property type="gene ID" value="ENSG00000160055.20"/>
</dbReference>
<dbReference type="Ensembl" id="ENST00000461402.5">
    <molecule id="Q8WY98-1"/>
    <property type="protein sequence ID" value="ENSP00000433020.1"/>
    <property type="gene ID" value="ENSG00000160055.20"/>
</dbReference>
<dbReference type="Ensembl" id="ENST00000489170.5">
    <molecule id="Q8WY98-1"/>
    <property type="protein sequence ID" value="ENSP00000436631.1"/>
    <property type="gene ID" value="ENSG00000160055.20"/>
</dbReference>
<dbReference type="Ensembl" id="ENST00000491434.5">
    <molecule id="Q8WY98-4"/>
    <property type="protein sequence ID" value="ENSP00000435588.1"/>
    <property type="gene ID" value="ENSG00000160055.20"/>
</dbReference>
<dbReference type="GeneID" id="56063"/>
<dbReference type="KEGG" id="hsa:56063"/>
<dbReference type="MANE-Select" id="ENST00000309777.11">
    <molecule id="Q8WY98-3"/>
    <property type="protein sequence ID" value="ENSP00000309792.6"/>
    <property type="RefSeq nucleotide sequence ID" value="NM_019118.5"/>
    <property type="RefSeq protein sequence ID" value="NP_061991.3"/>
</dbReference>
<dbReference type="UCSC" id="uc001buo.4">
    <molecule id="Q8WY98-1"/>
    <property type="organism name" value="human"/>
</dbReference>
<dbReference type="AGR" id="HGNC:28837"/>
<dbReference type="CTD" id="56063"/>
<dbReference type="GeneCards" id="TMEM234"/>
<dbReference type="HGNC" id="HGNC:28837">
    <property type="gene designation" value="TMEM234"/>
</dbReference>
<dbReference type="HPA" id="ENSG00000160055">
    <property type="expression patterns" value="Low tissue specificity"/>
</dbReference>
<dbReference type="MIM" id="620289">
    <property type="type" value="gene"/>
</dbReference>
<dbReference type="neXtProt" id="NX_Q8WY98"/>
<dbReference type="OpenTargets" id="ENSG00000160055"/>
<dbReference type="PharmGKB" id="PA142672475"/>
<dbReference type="VEuPathDB" id="HostDB:ENSG00000160055"/>
<dbReference type="eggNOG" id="KOG4831">
    <property type="taxonomic scope" value="Eukaryota"/>
</dbReference>
<dbReference type="GeneTree" id="ENSGT00940000162781"/>
<dbReference type="HOGENOM" id="CLU_2359081_0_0_1"/>
<dbReference type="InParanoid" id="Q8WY98"/>
<dbReference type="OMA" id="LGEWYAE"/>
<dbReference type="OrthoDB" id="43458at2759"/>
<dbReference type="PAN-GO" id="Q8WY98">
    <property type="GO annotations" value="0 GO annotations based on evolutionary models"/>
</dbReference>
<dbReference type="PhylomeDB" id="Q8WY98"/>
<dbReference type="TreeFam" id="TF300180"/>
<dbReference type="PathwayCommons" id="Q8WY98"/>
<dbReference type="SignaLink" id="Q8WY98"/>
<dbReference type="BioGRID-ORCS" id="56063">
    <property type="hits" value="16 hits in 1161 CRISPR screens"/>
</dbReference>
<dbReference type="ChiTaRS" id="TMEM234">
    <property type="organism name" value="human"/>
</dbReference>
<dbReference type="GenomeRNAi" id="56063"/>
<dbReference type="Pharos" id="Q8WY98">
    <property type="development level" value="Tdark"/>
</dbReference>
<dbReference type="PRO" id="PR:Q8WY98"/>
<dbReference type="Proteomes" id="UP000005640">
    <property type="component" value="Chromosome 1"/>
</dbReference>
<dbReference type="RNAct" id="Q8WY98">
    <property type="molecule type" value="protein"/>
</dbReference>
<dbReference type="Bgee" id="ENSG00000160055">
    <property type="expression patterns" value="Expressed in right uterine tube and 153 other cell types or tissues"/>
</dbReference>
<dbReference type="ExpressionAtlas" id="Q8WY98">
    <property type="expression patterns" value="baseline and differential"/>
</dbReference>
<dbReference type="GO" id="GO:0016020">
    <property type="term" value="C:membrane"/>
    <property type="evidence" value="ECO:0007669"/>
    <property type="project" value="UniProtKB-SubCell"/>
</dbReference>
<dbReference type="InterPro" id="IPR018908">
    <property type="entry name" value="TMEM234"/>
</dbReference>
<dbReference type="PANTHER" id="PTHR28668">
    <property type="entry name" value="TRANSMEMBRANE PROTEIN 234"/>
    <property type="match status" value="1"/>
</dbReference>
<dbReference type="PANTHER" id="PTHR28668:SF1">
    <property type="entry name" value="TRANSMEMBRANE PROTEIN 234"/>
    <property type="match status" value="1"/>
</dbReference>
<dbReference type="Pfam" id="PF10639">
    <property type="entry name" value="TMEM234"/>
    <property type="match status" value="1"/>
</dbReference>
<dbReference type="SUPFAM" id="SSF103481">
    <property type="entry name" value="Multidrug resistance efflux transporter EmrE"/>
    <property type="match status" value="1"/>
</dbReference>
<gene>
    <name type="primary">TMEM234</name>
    <name type="synonym">C1orf91</name>
    <name type="ORF">PP1065</name>
    <name type="ORF">UNQ548/PRO1105</name>
</gene>
<proteinExistence type="evidence at protein level"/>
<comment type="interaction">
    <interactant intactId="EBI-8642211">
        <id>Q8WY98</id>
    </interactant>
    <interactant intactId="EBI-13059134">
        <id>Q13520</id>
        <label>AQP6</label>
    </interactant>
    <organismsDiffer>false</organismsDiffer>
    <experiments>3</experiments>
</comment>
<comment type="interaction">
    <interactant intactId="EBI-8642211">
        <id>Q8WY98</id>
    </interactant>
    <interactant intactId="EBI-12244618">
        <id>Q6PL45-2</id>
        <label>BRICD5</label>
    </interactant>
    <organismsDiffer>false</organismsDiffer>
    <experiments>3</experiments>
</comment>
<comment type="interaction">
    <interactant intactId="EBI-8642211">
        <id>Q8WY98</id>
    </interactant>
    <interactant intactId="EBI-6942903">
        <id>Q96BA8</id>
        <label>CREB3L1</label>
    </interactant>
    <organismsDiffer>false</organismsDiffer>
    <experiments>3</experiments>
</comment>
<comment type="interaction">
    <interactant intactId="EBI-8642211">
        <id>Q8WY98</id>
    </interactant>
    <interactant intactId="EBI-3911467">
        <id>Q07325</id>
        <label>CXCL9</label>
    </interactant>
    <organismsDiffer>false</organismsDiffer>
    <experiments>3</experiments>
</comment>
<comment type="interaction">
    <interactant intactId="EBI-8642211">
        <id>Q8WY98</id>
    </interactant>
    <interactant intactId="EBI-12118888">
        <id>Q96D05-2</id>
        <label>FAM241B</label>
    </interactant>
    <organismsDiffer>false</organismsDiffer>
    <experiments>3</experiments>
</comment>
<comment type="interaction">
    <interactant intactId="EBI-8642211">
        <id>Q8WY98</id>
    </interactant>
    <interactant intactId="EBI-3923031">
        <id>Q14973</id>
        <label>SLC10A1</label>
    </interactant>
    <organismsDiffer>false</organismsDiffer>
    <experiments>3</experiments>
</comment>
<comment type="interaction">
    <interactant intactId="EBI-8642211">
        <id>Q8WY98</id>
    </interactant>
    <interactant intactId="EBI-18159983">
        <id>Q3KNW5</id>
        <label>SLC10A6</label>
    </interactant>
    <organismsDiffer>false</organismsDiffer>
    <experiments>3</experiments>
</comment>
<comment type="interaction">
    <interactant intactId="EBI-8642211">
        <id>Q8WY98</id>
    </interactant>
    <interactant intactId="EBI-17769653">
        <id>Q8N130</id>
        <label>SLC34A3</label>
    </interactant>
    <organismsDiffer>false</organismsDiffer>
    <experiments>3</experiments>
</comment>
<comment type="interaction">
    <interactant intactId="EBI-8642211">
        <id>Q8WY98</id>
    </interactant>
    <interactant intactId="EBI-13389236">
        <id>Q7Z769</id>
        <label>SLC35E3</label>
    </interactant>
    <organismsDiffer>false</organismsDiffer>
    <experiments>3</experiments>
</comment>
<comment type="interaction">
    <interactant intactId="EBI-8642211">
        <id>Q8WY98</id>
    </interactant>
    <interactant intactId="EBI-10226799">
        <id>Q0VAQ4</id>
        <label>SMAGP</label>
    </interactant>
    <organismsDiffer>false</organismsDiffer>
    <experiments>3</experiments>
</comment>
<comment type="interaction">
    <interactant intactId="EBI-8642211">
        <id>Q8WY98</id>
    </interactant>
    <interactant intactId="EBI-12845616">
        <id>Q6UX40</id>
        <label>TMEM107</label>
    </interactant>
    <organismsDiffer>false</organismsDiffer>
    <experiments>3</experiments>
</comment>
<comment type="interaction">
    <interactant intactId="EBI-8642211">
        <id>Q8WY98</id>
    </interactant>
    <interactant intactId="EBI-12274070">
        <id>Q969S6</id>
        <label>TMEM203</label>
    </interactant>
    <organismsDiffer>false</organismsDiffer>
    <experiments>3</experiments>
</comment>
<comment type="interaction">
    <interactant intactId="EBI-8642211">
        <id>Q8WY98</id>
    </interactant>
    <interactant intactId="EBI-10173151">
        <id>A2RU14</id>
        <label>TMEM218</label>
    </interactant>
    <organismsDiffer>false</organismsDiffer>
    <experiments>3</experiments>
</comment>
<comment type="interaction">
    <interactant intactId="EBI-8642211">
        <id>Q8WY98</id>
    </interactant>
    <interactant intactId="EBI-7601760">
        <id>Q53HI1</id>
        <label>UNC50</label>
    </interactant>
    <organismsDiffer>false</organismsDiffer>
    <experiments>3</experiments>
</comment>
<comment type="interaction">
    <interactant intactId="EBI-8642211">
        <id>Q8WY98</id>
    </interactant>
    <interactant intactId="EBI-723716">
        <id>Q9UEU0</id>
        <label>VTI1B</label>
    </interactant>
    <organismsDiffer>false</organismsDiffer>
    <experiments>3</experiments>
</comment>
<comment type="subcellular location">
    <subcellularLocation>
        <location evidence="5">Membrane</location>
        <topology evidence="5">Multi-pass membrane protein</topology>
    </subcellularLocation>
</comment>
<comment type="alternative products">
    <event type="alternative splicing"/>
    <isoform>
        <id>Q8WY98-1</id>
        <name>1</name>
        <sequence type="displayed"/>
    </isoform>
    <isoform>
        <id>Q8WY98-2</id>
        <name>2</name>
        <sequence type="described" ref="VSP_028107"/>
    </isoform>
    <isoform>
        <id>Q8WY98-3</id>
        <name>3</name>
        <sequence type="described" ref="VSP_028108 VSP_028109"/>
    </isoform>
    <isoform>
        <id>Q8WY98-4</id>
        <name>4</name>
        <sequence type="described" ref="VSP_028105 VSP_028106"/>
    </isoform>
</comment>
<comment type="miscellaneous">
    <molecule>Isoform 4</molecule>
    <text evidence="5">May be produced at very low levels due to a premature stop codon in the mRNA, leading to nonsense-mediated mRNA decay.</text>
</comment>
<comment type="similarity">
    <text evidence="5">Belongs to the TMEM234 family.</text>
</comment>
<comment type="sequence caution" evidence="5">
    <conflict type="erroneous initiation">
        <sequence resource="EMBL-CDS" id="BAC11504"/>
    </conflict>
    <text>Truncated N-terminus.</text>
</comment>
<protein>
    <recommendedName>
        <fullName>Transmembrane protein 234</fullName>
    </recommendedName>
</protein>
<reference key="1">
    <citation type="journal article" date="2003" name="Genome Res.">
        <title>The secreted protein discovery initiative (SPDI), a large-scale effort to identify novel human secreted and transmembrane proteins: a bioinformatics assessment.</title>
        <authorList>
            <person name="Clark H.F."/>
            <person name="Gurney A.L."/>
            <person name="Abaya E."/>
            <person name="Baker K."/>
            <person name="Baldwin D.T."/>
            <person name="Brush J."/>
            <person name="Chen J."/>
            <person name="Chow B."/>
            <person name="Chui C."/>
            <person name="Crowley C."/>
            <person name="Currell B."/>
            <person name="Deuel B."/>
            <person name="Dowd P."/>
            <person name="Eaton D."/>
            <person name="Foster J.S."/>
            <person name="Grimaldi C."/>
            <person name="Gu Q."/>
            <person name="Hass P.E."/>
            <person name="Heldens S."/>
            <person name="Huang A."/>
            <person name="Kim H.S."/>
            <person name="Klimowski L."/>
            <person name="Jin Y."/>
            <person name="Johnson S."/>
            <person name="Lee J."/>
            <person name="Lewis L."/>
            <person name="Liao D."/>
            <person name="Mark M.R."/>
            <person name="Robbie E."/>
            <person name="Sanchez C."/>
            <person name="Schoenfeld J."/>
            <person name="Seshagiri S."/>
            <person name="Simmons L."/>
            <person name="Singh J."/>
            <person name="Smith V."/>
            <person name="Stinson J."/>
            <person name="Vagts A."/>
            <person name="Vandlen R.L."/>
            <person name="Watanabe C."/>
            <person name="Wieand D."/>
            <person name="Woods K."/>
            <person name="Xie M.-H."/>
            <person name="Yansura D.G."/>
            <person name="Yi S."/>
            <person name="Yu G."/>
            <person name="Yuan J."/>
            <person name="Zhang M."/>
            <person name="Zhang Z."/>
            <person name="Goddard A.D."/>
            <person name="Wood W.I."/>
            <person name="Godowski P.J."/>
            <person name="Gray A.M."/>
        </authorList>
    </citation>
    <scope>NUCLEOTIDE SEQUENCE [LARGE SCALE MRNA] (ISOFORM 2)</scope>
</reference>
<reference key="2">
    <citation type="journal article" date="2004" name="Nat. Genet.">
        <title>Complete sequencing and characterization of 21,243 full-length human cDNAs.</title>
        <authorList>
            <person name="Ota T."/>
            <person name="Suzuki Y."/>
            <person name="Nishikawa T."/>
            <person name="Otsuki T."/>
            <person name="Sugiyama T."/>
            <person name="Irie R."/>
            <person name="Wakamatsu A."/>
            <person name="Hayashi K."/>
            <person name="Sato H."/>
            <person name="Nagai K."/>
            <person name="Kimura K."/>
            <person name="Makita H."/>
            <person name="Sekine M."/>
            <person name="Obayashi M."/>
            <person name="Nishi T."/>
            <person name="Shibahara T."/>
            <person name="Tanaka T."/>
            <person name="Ishii S."/>
            <person name="Yamamoto J."/>
            <person name="Saito K."/>
            <person name="Kawai Y."/>
            <person name="Isono Y."/>
            <person name="Nakamura Y."/>
            <person name="Nagahari K."/>
            <person name="Murakami K."/>
            <person name="Yasuda T."/>
            <person name="Iwayanagi T."/>
            <person name="Wagatsuma M."/>
            <person name="Shiratori A."/>
            <person name="Sudo H."/>
            <person name="Hosoiri T."/>
            <person name="Kaku Y."/>
            <person name="Kodaira H."/>
            <person name="Kondo H."/>
            <person name="Sugawara M."/>
            <person name="Takahashi M."/>
            <person name="Kanda K."/>
            <person name="Yokoi T."/>
            <person name="Furuya T."/>
            <person name="Kikkawa E."/>
            <person name="Omura Y."/>
            <person name="Abe K."/>
            <person name="Kamihara K."/>
            <person name="Katsuta N."/>
            <person name="Sato K."/>
            <person name="Tanikawa M."/>
            <person name="Yamazaki M."/>
            <person name="Ninomiya K."/>
            <person name="Ishibashi T."/>
            <person name="Yamashita H."/>
            <person name="Murakawa K."/>
            <person name="Fujimori K."/>
            <person name="Tanai H."/>
            <person name="Kimata M."/>
            <person name="Watanabe M."/>
            <person name="Hiraoka S."/>
            <person name="Chiba Y."/>
            <person name="Ishida S."/>
            <person name="Ono Y."/>
            <person name="Takiguchi S."/>
            <person name="Watanabe S."/>
            <person name="Yosida M."/>
            <person name="Hotuta T."/>
            <person name="Kusano J."/>
            <person name="Kanehori K."/>
            <person name="Takahashi-Fujii A."/>
            <person name="Hara H."/>
            <person name="Tanase T.-O."/>
            <person name="Nomura Y."/>
            <person name="Togiya S."/>
            <person name="Komai F."/>
            <person name="Hara R."/>
            <person name="Takeuchi K."/>
            <person name="Arita M."/>
            <person name="Imose N."/>
            <person name="Musashino K."/>
            <person name="Yuuki H."/>
            <person name="Oshima A."/>
            <person name="Sasaki N."/>
            <person name="Aotsuka S."/>
            <person name="Yoshikawa Y."/>
            <person name="Matsunawa H."/>
            <person name="Ichihara T."/>
            <person name="Shiohata N."/>
            <person name="Sano S."/>
            <person name="Moriya S."/>
            <person name="Momiyama H."/>
            <person name="Satoh N."/>
            <person name="Takami S."/>
            <person name="Terashima Y."/>
            <person name="Suzuki O."/>
            <person name="Nakagawa S."/>
            <person name="Senoh A."/>
            <person name="Mizoguchi H."/>
            <person name="Goto Y."/>
            <person name="Shimizu F."/>
            <person name="Wakebe H."/>
            <person name="Hishigaki H."/>
            <person name="Watanabe T."/>
            <person name="Sugiyama A."/>
            <person name="Takemoto M."/>
            <person name="Kawakami B."/>
            <person name="Yamazaki M."/>
            <person name="Watanabe K."/>
            <person name="Kumagai A."/>
            <person name="Itakura S."/>
            <person name="Fukuzumi Y."/>
            <person name="Fujimori Y."/>
            <person name="Komiyama M."/>
            <person name="Tashiro H."/>
            <person name="Tanigami A."/>
            <person name="Fujiwara T."/>
            <person name="Ono T."/>
            <person name="Yamada K."/>
            <person name="Fujii Y."/>
            <person name="Ozaki K."/>
            <person name="Hirao M."/>
            <person name="Ohmori Y."/>
            <person name="Kawabata A."/>
            <person name="Hikiji T."/>
            <person name="Kobatake N."/>
            <person name="Inagaki H."/>
            <person name="Ikema Y."/>
            <person name="Okamoto S."/>
            <person name="Okitani R."/>
            <person name="Kawakami T."/>
            <person name="Noguchi S."/>
            <person name="Itoh T."/>
            <person name="Shigeta K."/>
            <person name="Senba T."/>
            <person name="Matsumura K."/>
            <person name="Nakajima Y."/>
            <person name="Mizuno T."/>
            <person name="Morinaga M."/>
            <person name="Sasaki M."/>
            <person name="Togashi T."/>
            <person name="Oyama M."/>
            <person name="Hata H."/>
            <person name="Watanabe M."/>
            <person name="Komatsu T."/>
            <person name="Mizushima-Sugano J."/>
            <person name="Satoh T."/>
            <person name="Shirai Y."/>
            <person name="Takahashi Y."/>
            <person name="Nakagawa K."/>
            <person name="Okumura K."/>
            <person name="Nagase T."/>
            <person name="Nomura N."/>
            <person name="Kikuchi H."/>
            <person name="Masuho Y."/>
            <person name="Yamashita R."/>
            <person name="Nakai K."/>
            <person name="Yada T."/>
            <person name="Nakamura Y."/>
            <person name="Ohara O."/>
            <person name="Isogai T."/>
            <person name="Sugano S."/>
        </authorList>
    </citation>
    <scope>NUCLEOTIDE SEQUENCE [LARGE SCALE MRNA] (ISOFORM 1)</scope>
    <scope>NUCLEOTIDE SEQUENCE [LARGE SCALE MRNA] OF 58-164 (ISOFORM 2)</scope>
    <source>
        <tissue>Testis</tissue>
        <tissue>Thyroid</tissue>
    </source>
</reference>
<reference key="3">
    <citation type="journal article" date="2004" name="Proc. Natl. Acad. Sci. U.S.A.">
        <title>Large-scale cDNA transfection screening for genes related to cancer development and progression.</title>
        <authorList>
            <person name="Wan D."/>
            <person name="Gong Y."/>
            <person name="Qin W."/>
            <person name="Zhang P."/>
            <person name="Li J."/>
            <person name="Wei L."/>
            <person name="Zhou X."/>
            <person name="Li H."/>
            <person name="Qiu X."/>
            <person name="Zhong F."/>
            <person name="He L."/>
            <person name="Yu J."/>
            <person name="Yao G."/>
            <person name="Jiang H."/>
            <person name="Qian L."/>
            <person name="Yu Y."/>
            <person name="Shu H."/>
            <person name="Chen X."/>
            <person name="Xu H."/>
            <person name="Guo M."/>
            <person name="Pan Z."/>
            <person name="Chen Y."/>
            <person name="Ge C."/>
            <person name="Yang S."/>
            <person name="Gu J."/>
        </authorList>
    </citation>
    <scope>NUCLEOTIDE SEQUENCE [LARGE SCALE MRNA] (ISOFORM 1)</scope>
</reference>
<reference key="4">
    <citation type="journal article" date="2006" name="Nature">
        <title>The DNA sequence and biological annotation of human chromosome 1.</title>
        <authorList>
            <person name="Gregory S.G."/>
            <person name="Barlow K.F."/>
            <person name="McLay K.E."/>
            <person name="Kaul R."/>
            <person name="Swarbreck D."/>
            <person name="Dunham A."/>
            <person name="Scott C.E."/>
            <person name="Howe K.L."/>
            <person name="Woodfine K."/>
            <person name="Spencer C.C.A."/>
            <person name="Jones M.C."/>
            <person name="Gillson C."/>
            <person name="Searle S."/>
            <person name="Zhou Y."/>
            <person name="Kokocinski F."/>
            <person name="McDonald L."/>
            <person name="Evans R."/>
            <person name="Phillips K."/>
            <person name="Atkinson A."/>
            <person name="Cooper R."/>
            <person name="Jones C."/>
            <person name="Hall R.E."/>
            <person name="Andrews T.D."/>
            <person name="Lloyd C."/>
            <person name="Ainscough R."/>
            <person name="Almeida J.P."/>
            <person name="Ambrose K.D."/>
            <person name="Anderson F."/>
            <person name="Andrew R.W."/>
            <person name="Ashwell R.I.S."/>
            <person name="Aubin K."/>
            <person name="Babbage A.K."/>
            <person name="Bagguley C.L."/>
            <person name="Bailey J."/>
            <person name="Beasley H."/>
            <person name="Bethel G."/>
            <person name="Bird C.P."/>
            <person name="Bray-Allen S."/>
            <person name="Brown J.Y."/>
            <person name="Brown A.J."/>
            <person name="Buckley D."/>
            <person name="Burton J."/>
            <person name="Bye J."/>
            <person name="Carder C."/>
            <person name="Chapman J.C."/>
            <person name="Clark S.Y."/>
            <person name="Clarke G."/>
            <person name="Clee C."/>
            <person name="Cobley V."/>
            <person name="Collier R.E."/>
            <person name="Corby N."/>
            <person name="Coville G.J."/>
            <person name="Davies J."/>
            <person name="Deadman R."/>
            <person name="Dunn M."/>
            <person name="Earthrowl M."/>
            <person name="Ellington A.G."/>
            <person name="Errington H."/>
            <person name="Frankish A."/>
            <person name="Frankland J."/>
            <person name="French L."/>
            <person name="Garner P."/>
            <person name="Garnett J."/>
            <person name="Gay L."/>
            <person name="Ghori M.R.J."/>
            <person name="Gibson R."/>
            <person name="Gilby L.M."/>
            <person name="Gillett W."/>
            <person name="Glithero R.J."/>
            <person name="Grafham D.V."/>
            <person name="Griffiths C."/>
            <person name="Griffiths-Jones S."/>
            <person name="Grocock R."/>
            <person name="Hammond S."/>
            <person name="Harrison E.S.I."/>
            <person name="Hart E."/>
            <person name="Haugen E."/>
            <person name="Heath P.D."/>
            <person name="Holmes S."/>
            <person name="Holt K."/>
            <person name="Howden P.J."/>
            <person name="Hunt A.R."/>
            <person name="Hunt S.E."/>
            <person name="Hunter G."/>
            <person name="Isherwood J."/>
            <person name="James R."/>
            <person name="Johnson C."/>
            <person name="Johnson D."/>
            <person name="Joy A."/>
            <person name="Kay M."/>
            <person name="Kershaw J.K."/>
            <person name="Kibukawa M."/>
            <person name="Kimberley A.M."/>
            <person name="King A."/>
            <person name="Knights A.J."/>
            <person name="Lad H."/>
            <person name="Laird G."/>
            <person name="Lawlor S."/>
            <person name="Leongamornlert D.A."/>
            <person name="Lloyd D.M."/>
            <person name="Loveland J."/>
            <person name="Lovell J."/>
            <person name="Lush M.J."/>
            <person name="Lyne R."/>
            <person name="Martin S."/>
            <person name="Mashreghi-Mohammadi M."/>
            <person name="Matthews L."/>
            <person name="Matthews N.S.W."/>
            <person name="McLaren S."/>
            <person name="Milne S."/>
            <person name="Mistry S."/>
            <person name="Moore M.J.F."/>
            <person name="Nickerson T."/>
            <person name="O'Dell C.N."/>
            <person name="Oliver K."/>
            <person name="Palmeiri A."/>
            <person name="Palmer S.A."/>
            <person name="Parker A."/>
            <person name="Patel D."/>
            <person name="Pearce A.V."/>
            <person name="Peck A.I."/>
            <person name="Pelan S."/>
            <person name="Phelps K."/>
            <person name="Phillimore B.J."/>
            <person name="Plumb R."/>
            <person name="Rajan J."/>
            <person name="Raymond C."/>
            <person name="Rouse G."/>
            <person name="Saenphimmachak C."/>
            <person name="Sehra H.K."/>
            <person name="Sheridan E."/>
            <person name="Shownkeen R."/>
            <person name="Sims S."/>
            <person name="Skuce C.D."/>
            <person name="Smith M."/>
            <person name="Steward C."/>
            <person name="Subramanian S."/>
            <person name="Sycamore N."/>
            <person name="Tracey A."/>
            <person name="Tromans A."/>
            <person name="Van Helmond Z."/>
            <person name="Wall M."/>
            <person name="Wallis J.M."/>
            <person name="White S."/>
            <person name="Whitehead S.L."/>
            <person name="Wilkinson J.E."/>
            <person name="Willey D.L."/>
            <person name="Williams H."/>
            <person name="Wilming L."/>
            <person name="Wray P.W."/>
            <person name="Wu Z."/>
            <person name="Coulson A."/>
            <person name="Vaudin M."/>
            <person name="Sulston J.E."/>
            <person name="Durbin R.M."/>
            <person name="Hubbard T."/>
            <person name="Wooster R."/>
            <person name="Dunham I."/>
            <person name="Carter N.P."/>
            <person name="McVean G."/>
            <person name="Ross M.T."/>
            <person name="Harrow J."/>
            <person name="Olson M.V."/>
            <person name="Beck S."/>
            <person name="Rogers J."/>
            <person name="Bentley D.R."/>
        </authorList>
    </citation>
    <scope>NUCLEOTIDE SEQUENCE [LARGE SCALE GENOMIC DNA]</scope>
</reference>
<reference key="5">
    <citation type="submission" date="2005-09" db="EMBL/GenBank/DDBJ databases">
        <authorList>
            <person name="Mural R.J."/>
            <person name="Istrail S."/>
            <person name="Sutton G.G."/>
            <person name="Florea L."/>
            <person name="Halpern A.L."/>
            <person name="Mobarry C.M."/>
            <person name="Lippert R."/>
            <person name="Walenz B."/>
            <person name="Shatkay H."/>
            <person name="Dew I."/>
            <person name="Miller J.R."/>
            <person name="Flanigan M.J."/>
            <person name="Edwards N.J."/>
            <person name="Bolanos R."/>
            <person name="Fasulo D."/>
            <person name="Halldorsson B.V."/>
            <person name="Hannenhalli S."/>
            <person name="Turner R."/>
            <person name="Yooseph S."/>
            <person name="Lu F."/>
            <person name="Nusskern D.R."/>
            <person name="Shue B.C."/>
            <person name="Zheng X.H."/>
            <person name="Zhong F."/>
            <person name="Delcher A.L."/>
            <person name="Huson D.H."/>
            <person name="Kravitz S.A."/>
            <person name="Mouchard L."/>
            <person name="Reinert K."/>
            <person name="Remington K.A."/>
            <person name="Clark A.G."/>
            <person name="Waterman M.S."/>
            <person name="Eichler E.E."/>
            <person name="Adams M.D."/>
            <person name="Hunkapiller M.W."/>
            <person name="Myers E.W."/>
            <person name="Venter J.C."/>
        </authorList>
    </citation>
    <scope>NUCLEOTIDE SEQUENCE [LARGE SCALE GENOMIC DNA]</scope>
</reference>
<reference key="6">
    <citation type="journal article" date="2004" name="Genome Res.">
        <title>The status, quality, and expansion of the NIH full-length cDNA project: the Mammalian Gene Collection (MGC).</title>
        <authorList>
            <consortium name="The MGC Project Team"/>
        </authorList>
    </citation>
    <scope>NUCLEOTIDE SEQUENCE [LARGE SCALE MRNA] (ISOFORMS 1; 3 AND 4)</scope>
    <source>
        <tissue>Brain</tissue>
        <tissue>Cervix</tissue>
        <tissue>Ovary</tissue>
    </source>
</reference>
<name>TM234_HUMAN</name>
<feature type="chain" id="PRO_0000304697" description="Transmembrane protein 234">
    <location>
        <begin position="1"/>
        <end position="164"/>
    </location>
</feature>
<feature type="transmembrane region" description="Helical" evidence="1">
    <location>
        <begin position="1"/>
        <end position="21"/>
    </location>
</feature>
<feature type="transmembrane region" description="Helical" evidence="1">
    <location>
        <begin position="82"/>
        <end position="102"/>
    </location>
</feature>
<feature type="transmembrane region" description="Helical" evidence="1">
    <location>
        <begin position="112"/>
        <end position="132"/>
    </location>
</feature>
<feature type="splice variant" id="VSP_028105" description="In isoform 4." evidence="4">
    <original>DLTLAVPICNSLAIIFTL</original>
    <variation>GWSQTSEFRSSCWNPGKH</variation>
    <location>
        <begin position="79"/>
        <end position="96"/>
    </location>
</feature>
<feature type="splice variant" id="VSP_028106" description="In isoform 4." evidence="4">
    <location>
        <begin position="97"/>
        <end position="164"/>
    </location>
</feature>
<feature type="splice variant" id="VSP_028107" description="In isoform 2." evidence="2 3">
    <original>AVAGMVLTVIGISLCITSSVPWTAELQLHGKGQLQTLSQKCKREASGTQSERFG</original>
    <variation>KLDYCECGTQLCGSRHTCVSSFPEPISPEWVRTRPFPILPFPLQLFCFLVAIRVPFPWTVWRKTEAGVWD</variation>
    <location>
        <begin position="111"/>
        <end position="164"/>
    </location>
</feature>
<feature type="splice variant" id="VSP_028108" description="In isoform 3." evidence="4">
    <original>PWTAELQLHG</original>
    <variation>SKTQGQQSTL</variation>
    <location>
        <begin position="131"/>
        <end position="140"/>
    </location>
</feature>
<feature type="splice variant" id="VSP_028109" description="In isoform 3." evidence="4">
    <location>
        <begin position="141"/>
        <end position="164"/>
    </location>
</feature>
<feature type="sequence conflict" description="In Ref. 2; BAC11504." evidence="5" ref="2">
    <original>C</original>
    <variation>R</variation>
    <location>
        <position position="66"/>
    </location>
</feature>
<keyword id="KW-0025">Alternative splicing</keyword>
<keyword id="KW-0472">Membrane</keyword>
<keyword id="KW-1267">Proteomics identification</keyword>
<keyword id="KW-1185">Reference proteome</keyword>
<keyword id="KW-0812">Transmembrane</keyword>
<keyword id="KW-1133">Transmembrane helix</keyword>
<evidence type="ECO:0000255" key="1"/>
<evidence type="ECO:0000303" key="2">
    <source>
    </source>
</evidence>
<evidence type="ECO:0000303" key="3">
    <source>
    </source>
</evidence>
<evidence type="ECO:0000303" key="4">
    <source>
    </source>
</evidence>
<evidence type="ECO:0000305" key="5"/>